<protein>
    <recommendedName>
        <fullName evidence="1">Ribose-5-phosphate isomerase A</fullName>
        <ecNumber evidence="1">5.3.1.6</ecNumber>
    </recommendedName>
    <alternativeName>
        <fullName evidence="1">Phosphoriboisomerase A</fullName>
        <shortName evidence="1">PRI</shortName>
    </alternativeName>
</protein>
<proteinExistence type="inferred from homology"/>
<evidence type="ECO:0000255" key="1">
    <source>
        <dbReference type="HAMAP-Rule" id="MF_00170"/>
    </source>
</evidence>
<reference key="1">
    <citation type="journal article" date="2008" name="PLoS ONE">
        <title>Genome sequence of a lancefield group C Streptococcus zooepidemicus strain causing epidemic nephritis: new information about an old disease.</title>
        <authorList>
            <person name="Beres S.B."/>
            <person name="Sesso R."/>
            <person name="Pinto S.W.L."/>
            <person name="Hoe N.P."/>
            <person name="Porcella S.F."/>
            <person name="Deleo F.R."/>
            <person name="Musser J.M."/>
        </authorList>
    </citation>
    <scope>NUCLEOTIDE SEQUENCE [LARGE SCALE GENOMIC DNA]</scope>
    <source>
        <strain>MGCS10565</strain>
    </source>
</reference>
<dbReference type="EC" id="5.3.1.6" evidence="1"/>
<dbReference type="EMBL" id="CP001129">
    <property type="protein sequence ID" value="ACG62514.1"/>
    <property type="molecule type" value="Genomic_DNA"/>
</dbReference>
<dbReference type="RefSeq" id="WP_012515779.1">
    <property type="nucleotide sequence ID" value="NC_011134.1"/>
</dbReference>
<dbReference type="SMR" id="B4U3E7"/>
<dbReference type="KEGG" id="sez:Sez_1165"/>
<dbReference type="HOGENOM" id="CLU_056590_1_0_9"/>
<dbReference type="UniPathway" id="UPA00115">
    <property type="reaction ID" value="UER00412"/>
</dbReference>
<dbReference type="Proteomes" id="UP000001873">
    <property type="component" value="Chromosome"/>
</dbReference>
<dbReference type="GO" id="GO:0004751">
    <property type="term" value="F:ribose-5-phosphate isomerase activity"/>
    <property type="evidence" value="ECO:0007669"/>
    <property type="project" value="UniProtKB-UniRule"/>
</dbReference>
<dbReference type="GO" id="GO:0009052">
    <property type="term" value="P:pentose-phosphate shunt, non-oxidative branch"/>
    <property type="evidence" value="ECO:0007669"/>
    <property type="project" value="UniProtKB-UniRule"/>
</dbReference>
<dbReference type="CDD" id="cd01398">
    <property type="entry name" value="RPI_A"/>
    <property type="match status" value="1"/>
</dbReference>
<dbReference type="FunFam" id="3.40.50.1360:FF:000001">
    <property type="entry name" value="Ribose-5-phosphate isomerase A"/>
    <property type="match status" value="1"/>
</dbReference>
<dbReference type="Gene3D" id="3.30.70.260">
    <property type="match status" value="1"/>
</dbReference>
<dbReference type="Gene3D" id="3.40.50.1360">
    <property type="match status" value="1"/>
</dbReference>
<dbReference type="HAMAP" id="MF_00170">
    <property type="entry name" value="Rib_5P_isom_A"/>
    <property type="match status" value="1"/>
</dbReference>
<dbReference type="InterPro" id="IPR037171">
    <property type="entry name" value="NagB/RpiA_transferase-like"/>
</dbReference>
<dbReference type="InterPro" id="IPR050262">
    <property type="entry name" value="Ribose-5P_isomerase"/>
</dbReference>
<dbReference type="InterPro" id="IPR020672">
    <property type="entry name" value="Ribose5P_isomerase_typA_subgr"/>
</dbReference>
<dbReference type="InterPro" id="IPR004788">
    <property type="entry name" value="Ribose5P_isomerase_type_A"/>
</dbReference>
<dbReference type="NCBIfam" id="NF001924">
    <property type="entry name" value="PRK00702.1"/>
    <property type="match status" value="1"/>
</dbReference>
<dbReference type="NCBIfam" id="TIGR00021">
    <property type="entry name" value="rpiA"/>
    <property type="match status" value="1"/>
</dbReference>
<dbReference type="PANTHER" id="PTHR43748">
    <property type="entry name" value="RIBOSE-5-PHOSPHATE ISOMERASE 3, CHLOROPLASTIC-RELATED"/>
    <property type="match status" value="1"/>
</dbReference>
<dbReference type="PANTHER" id="PTHR43748:SF3">
    <property type="entry name" value="RIBOSE-5-PHOSPHATE ISOMERASE 3, CHLOROPLASTIC-RELATED"/>
    <property type="match status" value="1"/>
</dbReference>
<dbReference type="Pfam" id="PF06026">
    <property type="entry name" value="Rib_5-P_isom_A"/>
    <property type="match status" value="1"/>
</dbReference>
<dbReference type="SUPFAM" id="SSF75445">
    <property type="entry name" value="D-ribose-5-phosphate isomerase (RpiA), lid domain"/>
    <property type="match status" value="1"/>
</dbReference>
<dbReference type="SUPFAM" id="SSF100950">
    <property type="entry name" value="NagB/RpiA/CoA transferase-like"/>
    <property type="match status" value="1"/>
</dbReference>
<organism>
    <name type="scientific">Streptococcus equi subsp. zooepidemicus (strain MGCS10565)</name>
    <dbReference type="NCBI Taxonomy" id="552526"/>
    <lineage>
        <taxon>Bacteria</taxon>
        <taxon>Bacillati</taxon>
        <taxon>Bacillota</taxon>
        <taxon>Bacilli</taxon>
        <taxon>Lactobacillales</taxon>
        <taxon>Streptococcaceae</taxon>
        <taxon>Streptococcus</taxon>
    </lineage>
</organism>
<name>RPIA_STREM</name>
<sequence length="227" mass="24485">MEALKKLAGVTAAQYVTDGMTIGLGTGSTAYYFVEEIGRRIKEEGLQVVGVTTSSVTTKQAEGLGIPLTSIDDIDCIDLTVDGADEVDKAFNGIKGGGAALLMEKIVATPTKEYIWVVDESKLVDHLGAFKLPVEVVQYGADRLFRVFERAGYKPSFRMKGDKRLITDMQNFIIDLDLGCIENPCEFGRLLDQTVGVVEHGLFNGMVDKVIVAGQAGVTVLEANQST</sequence>
<feature type="chain" id="PRO_1000097695" description="Ribose-5-phosphate isomerase A">
    <location>
        <begin position="1"/>
        <end position="227"/>
    </location>
</feature>
<feature type="active site" description="Proton acceptor" evidence="1">
    <location>
        <position position="104"/>
    </location>
</feature>
<feature type="binding site" evidence="1">
    <location>
        <begin position="26"/>
        <end position="29"/>
    </location>
    <ligand>
        <name>substrate</name>
    </ligand>
</feature>
<feature type="binding site" evidence="1">
    <location>
        <begin position="82"/>
        <end position="85"/>
    </location>
    <ligand>
        <name>substrate</name>
    </ligand>
</feature>
<feature type="binding site" evidence="1">
    <location>
        <begin position="95"/>
        <end position="98"/>
    </location>
    <ligand>
        <name>substrate</name>
    </ligand>
</feature>
<feature type="binding site" evidence="1">
    <location>
        <position position="122"/>
    </location>
    <ligand>
        <name>substrate</name>
    </ligand>
</feature>
<comment type="function">
    <text evidence="1">Catalyzes the reversible conversion of ribose-5-phosphate to ribulose 5-phosphate.</text>
</comment>
<comment type="catalytic activity">
    <reaction evidence="1">
        <text>aldehydo-D-ribose 5-phosphate = D-ribulose 5-phosphate</text>
        <dbReference type="Rhea" id="RHEA:14657"/>
        <dbReference type="ChEBI" id="CHEBI:58121"/>
        <dbReference type="ChEBI" id="CHEBI:58273"/>
        <dbReference type="EC" id="5.3.1.6"/>
    </reaction>
</comment>
<comment type="pathway">
    <text evidence="1">Carbohydrate degradation; pentose phosphate pathway; D-ribose 5-phosphate from D-ribulose 5-phosphate (non-oxidative stage): step 1/1.</text>
</comment>
<comment type="subunit">
    <text evidence="1">Homodimer.</text>
</comment>
<comment type="similarity">
    <text evidence="1">Belongs to the ribose 5-phosphate isomerase family.</text>
</comment>
<keyword id="KW-0413">Isomerase</keyword>
<accession>B4U3E7</accession>
<gene>
    <name evidence="1" type="primary">rpiA</name>
    <name type="ordered locus">Sez_1165</name>
</gene>